<gene>
    <name evidence="1" type="primary">bioB</name>
    <name type="ordered locus">SF0724</name>
    <name type="ordered locus">S0766</name>
</gene>
<name>BIOB_SHIFL</name>
<feature type="chain" id="PRO_0000381635" description="Biotin synthase">
    <location>
        <begin position="1"/>
        <end position="346"/>
    </location>
</feature>
<feature type="domain" description="Radical SAM core" evidence="2">
    <location>
        <begin position="38"/>
        <end position="256"/>
    </location>
</feature>
<feature type="binding site" evidence="1">
    <location>
        <position position="53"/>
    </location>
    <ligand>
        <name>[4Fe-4S] cluster</name>
        <dbReference type="ChEBI" id="CHEBI:49883"/>
        <note>4Fe-4S-S-AdoMet</note>
    </ligand>
</feature>
<feature type="binding site" evidence="1">
    <location>
        <position position="57"/>
    </location>
    <ligand>
        <name>[4Fe-4S] cluster</name>
        <dbReference type="ChEBI" id="CHEBI:49883"/>
        <note>4Fe-4S-S-AdoMet</note>
    </ligand>
</feature>
<feature type="binding site" evidence="1">
    <location>
        <position position="60"/>
    </location>
    <ligand>
        <name>[4Fe-4S] cluster</name>
        <dbReference type="ChEBI" id="CHEBI:49883"/>
        <note>4Fe-4S-S-AdoMet</note>
    </ligand>
</feature>
<feature type="binding site" evidence="1">
    <location>
        <position position="97"/>
    </location>
    <ligand>
        <name>[2Fe-2S] cluster</name>
        <dbReference type="ChEBI" id="CHEBI:190135"/>
    </ligand>
</feature>
<feature type="binding site" evidence="1">
    <location>
        <position position="128"/>
    </location>
    <ligand>
        <name>[2Fe-2S] cluster</name>
        <dbReference type="ChEBI" id="CHEBI:190135"/>
    </ligand>
</feature>
<feature type="binding site" evidence="1">
    <location>
        <position position="188"/>
    </location>
    <ligand>
        <name>[2Fe-2S] cluster</name>
        <dbReference type="ChEBI" id="CHEBI:190135"/>
    </ligand>
</feature>
<feature type="binding site" evidence="1">
    <location>
        <position position="260"/>
    </location>
    <ligand>
        <name>[2Fe-2S] cluster</name>
        <dbReference type="ChEBI" id="CHEBI:190135"/>
    </ligand>
</feature>
<sequence length="346" mass="38590">MAHRPRWTLSQVTELFEKPLLDLLFEAQQVHRQHFEPRQVQVSTLLSIKTGACPEDCKYCPQSSRYKTGLEAERLMEVEQVLESARKAKAAGSTRFCMGAAWKNPHERDMPYLEQMVQGVKAMGLEACMTLGTLSESQAQRLANAGLDYYNHNLDTSPEFYGNIITTRTYQERLDTLEKVRDAGIKVCSGGIVGLGETVKDRAGLLLQLANLPTPPESVPINMLVKVKGTPLADNDDVDAFDFIRTIAVARIMMPTSYVRLSAGREQMNEQTQAMCFMAGANSIFYGCKLLTTPNPEEDKDLQLFRKLGLNPQQTAVLAGDNEQQQRLGQALMTPDTDEYYNAAAL</sequence>
<protein>
    <recommendedName>
        <fullName evidence="1">Biotin synthase</fullName>
        <ecNumber evidence="1">2.8.1.6</ecNumber>
    </recommendedName>
</protein>
<accession>Q83S46</accession>
<accession>Q7C2H4</accession>
<reference key="1">
    <citation type="journal article" date="2002" name="Nucleic Acids Res.">
        <title>Genome sequence of Shigella flexneri 2a: insights into pathogenicity through comparison with genomes of Escherichia coli K12 and O157.</title>
        <authorList>
            <person name="Jin Q."/>
            <person name="Yuan Z."/>
            <person name="Xu J."/>
            <person name="Wang Y."/>
            <person name="Shen Y."/>
            <person name="Lu W."/>
            <person name="Wang J."/>
            <person name="Liu H."/>
            <person name="Yang J."/>
            <person name="Yang F."/>
            <person name="Zhang X."/>
            <person name="Zhang J."/>
            <person name="Yang G."/>
            <person name="Wu H."/>
            <person name="Qu D."/>
            <person name="Dong J."/>
            <person name="Sun L."/>
            <person name="Xue Y."/>
            <person name="Zhao A."/>
            <person name="Gao Y."/>
            <person name="Zhu J."/>
            <person name="Kan B."/>
            <person name="Ding K."/>
            <person name="Chen S."/>
            <person name="Cheng H."/>
            <person name="Yao Z."/>
            <person name="He B."/>
            <person name="Chen R."/>
            <person name="Ma D."/>
            <person name="Qiang B."/>
            <person name="Wen Y."/>
            <person name="Hou Y."/>
            <person name="Yu J."/>
        </authorList>
    </citation>
    <scope>NUCLEOTIDE SEQUENCE [LARGE SCALE GENOMIC DNA]</scope>
    <source>
        <strain>301 / Serotype 2a</strain>
    </source>
</reference>
<reference key="2">
    <citation type="journal article" date="2003" name="Infect. Immun.">
        <title>Complete genome sequence and comparative genomics of Shigella flexneri serotype 2a strain 2457T.</title>
        <authorList>
            <person name="Wei J."/>
            <person name="Goldberg M.B."/>
            <person name="Burland V."/>
            <person name="Venkatesan M.M."/>
            <person name="Deng W."/>
            <person name="Fournier G."/>
            <person name="Mayhew G.F."/>
            <person name="Plunkett G. III"/>
            <person name="Rose D.J."/>
            <person name="Darling A."/>
            <person name="Mau B."/>
            <person name="Perna N.T."/>
            <person name="Payne S.M."/>
            <person name="Runyen-Janecky L.J."/>
            <person name="Zhou S."/>
            <person name="Schwartz D.C."/>
            <person name="Blattner F.R."/>
        </authorList>
    </citation>
    <scope>NUCLEOTIDE SEQUENCE [LARGE SCALE GENOMIC DNA]</scope>
    <source>
        <strain>ATCC 700930 / 2457T / Serotype 2a</strain>
    </source>
</reference>
<keyword id="KW-0001">2Fe-2S</keyword>
<keyword id="KW-0004">4Fe-4S</keyword>
<keyword id="KW-0093">Biotin biosynthesis</keyword>
<keyword id="KW-0408">Iron</keyword>
<keyword id="KW-0411">Iron-sulfur</keyword>
<keyword id="KW-0479">Metal-binding</keyword>
<keyword id="KW-1185">Reference proteome</keyword>
<keyword id="KW-0949">S-adenosyl-L-methionine</keyword>
<keyword id="KW-0808">Transferase</keyword>
<organism>
    <name type="scientific">Shigella flexneri</name>
    <dbReference type="NCBI Taxonomy" id="623"/>
    <lineage>
        <taxon>Bacteria</taxon>
        <taxon>Pseudomonadati</taxon>
        <taxon>Pseudomonadota</taxon>
        <taxon>Gammaproteobacteria</taxon>
        <taxon>Enterobacterales</taxon>
        <taxon>Enterobacteriaceae</taxon>
        <taxon>Shigella</taxon>
    </lineage>
</organism>
<evidence type="ECO:0000255" key="1">
    <source>
        <dbReference type="HAMAP-Rule" id="MF_01694"/>
    </source>
</evidence>
<evidence type="ECO:0000255" key="2">
    <source>
        <dbReference type="PROSITE-ProRule" id="PRU01266"/>
    </source>
</evidence>
<comment type="function">
    <text evidence="1">Catalyzes the conversion of dethiobiotin (DTB) to biotin by the insertion of a sulfur atom into dethiobiotin via a radical-based mechanism.</text>
</comment>
<comment type="catalytic activity">
    <reaction evidence="1">
        <text>(4R,5S)-dethiobiotin + (sulfur carrier)-SH + 2 reduced [2Fe-2S]-[ferredoxin] + 2 S-adenosyl-L-methionine = (sulfur carrier)-H + biotin + 2 5'-deoxyadenosine + 2 L-methionine + 2 oxidized [2Fe-2S]-[ferredoxin]</text>
        <dbReference type="Rhea" id="RHEA:22060"/>
        <dbReference type="Rhea" id="RHEA-COMP:10000"/>
        <dbReference type="Rhea" id="RHEA-COMP:10001"/>
        <dbReference type="Rhea" id="RHEA-COMP:14737"/>
        <dbReference type="Rhea" id="RHEA-COMP:14739"/>
        <dbReference type="ChEBI" id="CHEBI:17319"/>
        <dbReference type="ChEBI" id="CHEBI:29917"/>
        <dbReference type="ChEBI" id="CHEBI:33737"/>
        <dbReference type="ChEBI" id="CHEBI:33738"/>
        <dbReference type="ChEBI" id="CHEBI:57586"/>
        <dbReference type="ChEBI" id="CHEBI:57844"/>
        <dbReference type="ChEBI" id="CHEBI:59789"/>
        <dbReference type="ChEBI" id="CHEBI:64428"/>
        <dbReference type="ChEBI" id="CHEBI:149473"/>
        <dbReference type="EC" id="2.8.1.6"/>
    </reaction>
</comment>
<comment type="cofactor">
    <cofactor evidence="1">
        <name>[4Fe-4S] cluster</name>
        <dbReference type="ChEBI" id="CHEBI:49883"/>
    </cofactor>
    <text evidence="1">Binds 1 [4Fe-4S] cluster. The cluster is coordinated with 3 cysteines and an exchangeable S-adenosyl-L-methionine.</text>
</comment>
<comment type="cofactor">
    <cofactor evidence="1">
        <name>[2Fe-2S] cluster</name>
        <dbReference type="ChEBI" id="CHEBI:190135"/>
    </cofactor>
    <text evidence="1">Binds 1 [2Fe-2S] cluster. The cluster is coordinated with 3 cysteines and 1 arginine.</text>
</comment>
<comment type="pathway">
    <text evidence="1">Cofactor biosynthesis; biotin biosynthesis; biotin from 7,8-diaminononanoate: step 2/2.</text>
</comment>
<comment type="subunit">
    <text evidence="1">Homodimer.</text>
</comment>
<comment type="similarity">
    <text evidence="1">Belongs to the radical SAM superfamily. Biotin synthase family.</text>
</comment>
<dbReference type="EC" id="2.8.1.6" evidence="1"/>
<dbReference type="EMBL" id="AE005674">
    <property type="protein sequence ID" value="AAN42360.1"/>
    <property type="molecule type" value="Genomic_DNA"/>
</dbReference>
<dbReference type="EMBL" id="AE014073">
    <property type="protein sequence ID" value="AAP16237.1"/>
    <property type="molecule type" value="Genomic_DNA"/>
</dbReference>
<dbReference type="RefSeq" id="NP_706653.1">
    <property type="nucleotide sequence ID" value="NC_004337.2"/>
</dbReference>
<dbReference type="RefSeq" id="WP_000951226.1">
    <property type="nucleotide sequence ID" value="NZ_WPGW01000030.1"/>
</dbReference>
<dbReference type="SMR" id="Q83S46"/>
<dbReference type="STRING" id="198214.SF0724"/>
<dbReference type="PaxDb" id="198214-SF0724"/>
<dbReference type="GeneID" id="1023676"/>
<dbReference type="KEGG" id="sfl:SF0724"/>
<dbReference type="KEGG" id="sfx:S0766"/>
<dbReference type="PATRIC" id="fig|198214.7.peg.845"/>
<dbReference type="HOGENOM" id="CLU_033172_1_2_6"/>
<dbReference type="UniPathway" id="UPA00078">
    <property type="reaction ID" value="UER00162"/>
</dbReference>
<dbReference type="Proteomes" id="UP000001006">
    <property type="component" value="Chromosome"/>
</dbReference>
<dbReference type="Proteomes" id="UP000002673">
    <property type="component" value="Chromosome"/>
</dbReference>
<dbReference type="GO" id="GO:0051537">
    <property type="term" value="F:2 iron, 2 sulfur cluster binding"/>
    <property type="evidence" value="ECO:0007669"/>
    <property type="project" value="UniProtKB-KW"/>
</dbReference>
<dbReference type="GO" id="GO:0051539">
    <property type="term" value="F:4 iron, 4 sulfur cluster binding"/>
    <property type="evidence" value="ECO:0007669"/>
    <property type="project" value="UniProtKB-KW"/>
</dbReference>
<dbReference type="GO" id="GO:0004076">
    <property type="term" value="F:biotin synthase activity"/>
    <property type="evidence" value="ECO:0007669"/>
    <property type="project" value="UniProtKB-UniRule"/>
</dbReference>
<dbReference type="GO" id="GO:0005506">
    <property type="term" value="F:iron ion binding"/>
    <property type="evidence" value="ECO:0007669"/>
    <property type="project" value="UniProtKB-UniRule"/>
</dbReference>
<dbReference type="GO" id="GO:0009102">
    <property type="term" value="P:biotin biosynthetic process"/>
    <property type="evidence" value="ECO:0007669"/>
    <property type="project" value="UniProtKB-UniRule"/>
</dbReference>
<dbReference type="CDD" id="cd01335">
    <property type="entry name" value="Radical_SAM"/>
    <property type="match status" value="1"/>
</dbReference>
<dbReference type="FunFam" id="3.20.20.70:FF:000011">
    <property type="entry name" value="Biotin synthase"/>
    <property type="match status" value="1"/>
</dbReference>
<dbReference type="Gene3D" id="3.20.20.70">
    <property type="entry name" value="Aldolase class I"/>
    <property type="match status" value="1"/>
</dbReference>
<dbReference type="HAMAP" id="MF_01694">
    <property type="entry name" value="BioB"/>
    <property type="match status" value="1"/>
</dbReference>
<dbReference type="InterPro" id="IPR013785">
    <property type="entry name" value="Aldolase_TIM"/>
</dbReference>
<dbReference type="InterPro" id="IPR010722">
    <property type="entry name" value="BATS_dom"/>
</dbReference>
<dbReference type="InterPro" id="IPR002684">
    <property type="entry name" value="Biotin_synth/BioAB"/>
</dbReference>
<dbReference type="InterPro" id="IPR024177">
    <property type="entry name" value="Biotin_synthase"/>
</dbReference>
<dbReference type="InterPro" id="IPR006638">
    <property type="entry name" value="Elp3/MiaA/NifB-like_rSAM"/>
</dbReference>
<dbReference type="InterPro" id="IPR007197">
    <property type="entry name" value="rSAM"/>
</dbReference>
<dbReference type="NCBIfam" id="TIGR00433">
    <property type="entry name" value="bioB"/>
    <property type="match status" value="1"/>
</dbReference>
<dbReference type="PANTHER" id="PTHR22976">
    <property type="entry name" value="BIOTIN SYNTHASE"/>
    <property type="match status" value="1"/>
</dbReference>
<dbReference type="PANTHER" id="PTHR22976:SF2">
    <property type="entry name" value="BIOTIN SYNTHASE, MITOCHONDRIAL"/>
    <property type="match status" value="1"/>
</dbReference>
<dbReference type="Pfam" id="PF06968">
    <property type="entry name" value="BATS"/>
    <property type="match status" value="1"/>
</dbReference>
<dbReference type="Pfam" id="PF04055">
    <property type="entry name" value="Radical_SAM"/>
    <property type="match status" value="1"/>
</dbReference>
<dbReference type="PIRSF" id="PIRSF001619">
    <property type="entry name" value="Biotin_synth"/>
    <property type="match status" value="1"/>
</dbReference>
<dbReference type="SFLD" id="SFLDF00272">
    <property type="entry name" value="biotin_synthase"/>
    <property type="match status" value="1"/>
</dbReference>
<dbReference type="SFLD" id="SFLDS00029">
    <property type="entry name" value="Radical_SAM"/>
    <property type="match status" value="1"/>
</dbReference>
<dbReference type="SMART" id="SM00876">
    <property type="entry name" value="BATS"/>
    <property type="match status" value="1"/>
</dbReference>
<dbReference type="SMART" id="SM00729">
    <property type="entry name" value="Elp3"/>
    <property type="match status" value="1"/>
</dbReference>
<dbReference type="SUPFAM" id="SSF102114">
    <property type="entry name" value="Radical SAM enzymes"/>
    <property type="match status" value="1"/>
</dbReference>
<dbReference type="PROSITE" id="PS51918">
    <property type="entry name" value="RADICAL_SAM"/>
    <property type="match status" value="1"/>
</dbReference>
<proteinExistence type="inferred from homology"/>